<feature type="transit peptide" description="Mitochondrion" evidence="1">
    <location>
        <begin position="1"/>
        <end position="44"/>
    </location>
</feature>
<feature type="chain" id="PRO_0000402883" description="Translation factor GUF1, mitochondrial">
    <location>
        <begin position="45"/>
        <end position="663"/>
    </location>
</feature>
<feature type="domain" description="tr-type G">
    <location>
        <begin position="65"/>
        <end position="245"/>
    </location>
</feature>
<feature type="binding site" evidence="1">
    <location>
        <begin position="74"/>
        <end position="81"/>
    </location>
    <ligand>
        <name>GTP</name>
        <dbReference type="ChEBI" id="CHEBI:37565"/>
    </ligand>
</feature>
<feature type="binding site" evidence="1">
    <location>
        <begin position="138"/>
        <end position="142"/>
    </location>
    <ligand>
        <name>GTP</name>
        <dbReference type="ChEBI" id="CHEBI:37565"/>
    </ligand>
</feature>
<feature type="binding site" evidence="1">
    <location>
        <begin position="192"/>
        <end position="195"/>
    </location>
    <ligand>
        <name>GTP</name>
        <dbReference type="ChEBI" id="CHEBI:37565"/>
    </ligand>
</feature>
<keyword id="KW-0342">GTP-binding</keyword>
<keyword id="KW-0378">Hydrolase</keyword>
<keyword id="KW-0472">Membrane</keyword>
<keyword id="KW-0496">Mitochondrion</keyword>
<keyword id="KW-0999">Mitochondrion inner membrane</keyword>
<keyword id="KW-0547">Nucleotide-binding</keyword>
<keyword id="KW-0648">Protein biosynthesis</keyword>
<keyword id="KW-0809">Transit peptide</keyword>
<reference key="1">
    <citation type="journal article" date="2009" name="Genome Res.">
        <title>Comparative genomic analyses of the human fungal pathogens Coccidioides and their relatives.</title>
        <authorList>
            <person name="Sharpton T.J."/>
            <person name="Stajich J.E."/>
            <person name="Rounsley S.D."/>
            <person name="Gardner M.J."/>
            <person name="Wortman J.R."/>
            <person name="Jordar V.S."/>
            <person name="Maiti R."/>
            <person name="Kodira C.D."/>
            <person name="Neafsey D.E."/>
            <person name="Zeng Q."/>
            <person name="Hung C.-Y."/>
            <person name="McMahan C."/>
            <person name="Muszewska A."/>
            <person name="Grynberg M."/>
            <person name="Mandel M.A."/>
            <person name="Kellner E.M."/>
            <person name="Barker B.M."/>
            <person name="Galgiani J.N."/>
            <person name="Orbach M.J."/>
            <person name="Kirkland T.N."/>
            <person name="Cole G.T."/>
            <person name="Henn M.R."/>
            <person name="Birren B.W."/>
            <person name="Taylor J.W."/>
        </authorList>
    </citation>
    <scope>NUCLEOTIDE SEQUENCE [LARGE SCALE GENOMIC DNA]</scope>
    <source>
        <strain>C735</strain>
    </source>
</reference>
<proteinExistence type="inferred from homology"/>
<name>GUF1_COCP7</name>
<protein>
    <recommendedName>
        <fullName evidence="1">Translation factor GUF1, mitochondrial</fullName>
        <ecNumber>3.6.5.-</ecNumber>
    </recommendedName>
    <alternativeName>
        <fullName evidence="1">Elongation factor 4 homolog</fullName>
        <shortName evidence="1">EF-4</shortName>
    </alternativeName>
    <alternativeName>
        <fullName evidence="1">GTPase GUF1</fullName>
    </alternativeName>
    <alternativeName>
        <fullName evidence="1">Ribosomal back-translocase</fullName>
    </alternativeName>
</protein>
<dbReference type="EC" id="3.6.5.-"/>
<dbReference type="EMBL" id="ACFW01000041">
    <property type="protein sequence ID" value="EER25651.1"/>
    <property type="molecule type" value="Genomic_DNA"/>
</dbReference>
<dbReference type="RefSeq" id="XP_003067796.1">
    <property type="nucleotide sequence ID" value="XM_003067750.1"/>
</dbReference>
<dbReference type="SMR" id="C5PCH4"/>
<dbReference type="GeneID" id="9693279"/>
<dbReference type="KEGG" id="cpw:9693279"/>
<dbReference type="VEuPathDB" id="FungiDB:CPC735_067510"/>
<dbReference type="HOGENOM" id="CLU_009995_3_1_1"/>
<dbReference type="OrthoDB" id="1074at2759"/>
<dbReference type="Proteomes" id="UP000009084">
    <property type="component" value="Unassembled WGS sequence"/>
</dbReference>
<dbReference type="GO" id="GO:0005743">
    <property type="term" value="C:mitochondrial inner membrane"/>
    <property type="evidence" value="ECO:0007669"/>
    <property type="project" value="UniProtKB-SubCell"/>
</dbReference>
<dbReference type="GO" id="GO:0005759">
    <property type="term" value="C:mitochondrial matrix"/>
    <property type="evidence" value="ECO:0007669"/>
    <property type="project" value="UniProtKB-UniRule"/>
</dbReference>
<dbReference type="GO" id="GO:0005525">
    <property type="term" value="F:GTP binding"/>
    <property type="evidence" value="ECO:0007669"/>
    <property type="project" value="UniProtKB-UniRule"/>
</dbReference>
<dbReference type="GO" id="GO:0003924">
    <property type="term" value="F:GTPase activity"/>
    <property type="evidence" value="ECO:0007669"/>
    <property type="project" value="UniProtKB-UniRule"/>
</dbReference>
<dbReference type="GO" id="GO:0097177">
    <property type="term" value="F:mitochondrial ribosome binding"/>
    <property type="evidence" value="ECO:0007669"/>
    <property type="project" value="TreeGrafter"/>
</dbReference>
<dbReference type="GO" id="GO:0045727">
    <property type="term" value="P:positive regulation of translation"/>
    <property type="evidence" value="ECO:0007669"/>
    <property type="project" value="UniProtKB-UniRule"/>
</dbReference>
<dbReference type="GO" id="GO:0006412">
    <property type="term" value="P:translation"/>
    <property type="evidence" value="ECO:0007669"/>
    <property type="project" value="UniProtKB-KW"/>
</dbReference>
<dbReference type="CDD" id="cd03699">
    <property type="entry name" value="EF4_II"/>
    <property type="match status" value="1"/>
</dbReference>
<dbReference type="CDD" id="cd01890">
    <property type="entry name" value="LepA"/>
    <property type="match status" value="1"/>
</dbReference>
<dbReference type="CDD" id="cd03709">
    <property type="entry name" value="lepA_C"/>
    <property type="match status" value="1"/>
</dbReference>
<dbReference type="FunFam" id="3.40.50.300:FF:000078">
    <property type="entry name" value="Elongation factor 4"/>
    <property type="match status" value="1"/>
</dbReference>
<dbReference type="FunFam" id="2.40.30.10:FF:000015">
    <property type="entry name" value="Translation factor GUF1, mitochondrial"/>
    <property type="match status" value="1"/>
</dbReference>
<dbReference type="FunFam" id="3.30.70.240:FF:000007">
    <property type="entry name" value="Translation factor GUF1, mitochondrial"/>
    <property type="match status" value="1"/>
</dbReference>
<dbReference type="FunFam" id="3.30.70.2570:FF:000001">
    <property type="entry name" value="Translation factor GUF1, mitochondrial"/>
    <property type="match status" value="1"/>
</dbReference>
<dbReference type="FunFam" id="3.30.70.870:FF:000004">
    <property type="entry name" value="Translation factor GUF1, mitochondrial"/>
    <property type="match status" value="1"/>
</dbReference>
<dbReference type="Gene3D" id="3.30.70.240">
    <property type="match status" value="1"/>
</dbReference>
<dbReference type="Gene3D" id="3.30.70.2570">
    <property type="entry name" value="Elongation factor 4, C-terminal domain"/>
    <property type="match status" value="1"/>
</dbReference>
<dbReference type="Gene3D" id="3.30.70.870">
    <property type="entry name" value="Elongation Factor G (Translational Gtpase), domain 3"/>
    <property type="match status" value="1"/>
</dbReference>
<dbReference type="Gene3D" id="3.40.50.300">
    <property type="entry name" value="P-loop containing nucleotide triphosphate hydrolases"/>
    <property type="match status" value="1"/>
</dbReference>
<dbReference type="Gene3D" id="2.40.30.10">
    <property type="entry name" value="Translation factors"/>
    <property type="match status" value="1"/>
</dbReference>
<dbReference type="HAMAP" id="MF_00071">
    <property type="entry name" value="LepA"/>
    <property type="match status" value="1"/>
</dbReference>
<dbReference type="InterPro" id="IPR006297">
    <property type="entry name" value="EF-4"/>
</dbReference>
<dbReference type="InterPro" id="IPR035647">
    <property type="entry name" value="EFG_III/V"/>
</dbReference>
<dbReference type="InterPro" id="IPR000640">
    <property type="entry name" value="EFG_V-like"/>
</dbReference>
<dbReference type="InterPro" id="IPR004161">
    <property type="entry name" value="EFTu-like_2"/>
</dbReference>
<dbReference type="InterPro" id="IPR031157">
    <property type="entry name" value="G_TR_CS"/>
</dbReference>
<dbReference type="InterPro" id="IPR038363">
    <property type="entry name" value="LepA_C_sf"/>
</dbReference>
<dbReference type="InterPro" id="IPR013842">
    <property type="entry name" value="LepA_CTD"/>
</dbReference>
<dbReference type="InterPro" id="IPR035654">
    <property type="entry name" value="LepA_IV"/>
</dbReference>
<dbReference type="InterPro" id="IPR027417">
    <property type="entry name" value="P-loop_NTPase"/>
</dbReference>
<dbReference type="InterPro" id="IPR005225">
    <property type="entry name" value="Small_GTP-bd"/>
</dbReference>
<dbReference type="InterPro" id="IPR000795">
    <property type="entry name" value="T_Tr_GTP-bd_dom"/>
</dbReference>
<dbReference type="InterPro" id="IPR009000">
    <property type="entry name" value="Transl_B-barrel_sf"/>
</dbReference>
<dbReference type="NCBIfam" id="TIGR01393">
    <property type="entry name" value="lepA"/>
    <property type="match status" value="1"/>
</dbReference>
<dbReference type="NCBIfam" id="TIGR00231">
    <property type="entry name" value="small_GTP"/>
    <property type="match status" value="1"/>
</dbReference>
<dbReference type="PANTHER" id="PTHR43512:SF7">
    <property type="entry name" value="TRANSLATION FACTOR GUF1, MITOCHONDRIAL"/>
    <property type="match status" value="1"/>
</dbReference>
<dbReference type="PANTHER" id="PTHR43512">
    <property type="entry name" value="TRANSLATION FACTOR GUF1-RELATED"/>
    <property type="match status" value="1"/>
</dbReference>
<dbReference type="Pfam" id="PF00679">
    <property type="entry name" value="EFG_C"/>
    <property type="match status" value="1"/>
</dbReference>
<dbReference type="Pfam" id="PF00009">
    <property type="entry name" value="GTP_EFTU"/>
    <property type="match status" value="1"/>
</dbReference>
<dbReference type="Pfam" id="PF03144">
    <property type="entry name" value="GTP_EFTU_D2"/>
    <property type="match status" value="1"/>
</dbReference>
<dbReference type="Pfam" id="PF06421">
    <property type="entry name" value="LepA_C"/>
    <property type="match status" value="1"/>
</dbReference>
<dbReference type="PRINTS" id="PR00315">
    <property type="entry name" value="ELONGATNFCT"/>
</dbReference>
<dbReference type="SUPFAM" id="SSF54980">
    <property type="entry name" value="EF-G C-terminal domain-like"/>
    <property type="match status" value="2"/>
</dbReference>
<dbReference type="SUPFAM" id="SSF52540">
    <property type="entry name" value="P-loop containing nucleoside triphosphate hydrolases"/>
    <property type="match status" value="1"/>
</dbReference>
<dbReference type="SUPFAM" id="SSF50447">
    <property type="entry name" value="Translation proteins"/>
    <property type="match status" value="1"/>
</dbReference>
<dbReference type="PROSITE" id="PS00301">
    <property type="entry name" value="G_TR_1"/>
    <property type="match status" value="1"/>
</dbReference>
<dbReference type="PROSITE" id="PS51722">
    <property type="entry name" value="G_TR_2"/>
    <property type="match status" value="1"/>
</dbReference>
<gene>
    <name evidence="1" type="primary">GUF1</name>
    <name type="ORF">CPC735_067510</name>
</gene>
<evidence type="ECO:0000255" key="1">
    <source>
        <dbReference type="HAMAP-Rule" id="MF_03137"/>
    </source>
</evidence>
<evidence type="ECO:0000305" key="2"/>
<organism>
    <name type="scientific">Coccidioides posadasii (strain C735)</name>
    <name type="common">Valley fever fungus</name>
    <dbReference type="NCBI Taxonomy" id="222929"/>
    <lineage>
        <taxon>Eukaryota</taxon>
        <taxon>Fungi</taxon>
        <taxon>Dikarya</taxon>
        <taxon>Ascomycota</taxon>
        <taxon>Pezizomycotina</taxon>
        <taxon>Eurotiomycetes</taxon>
        <taxon>Eurotiomycetidae</taxon>
        <taxon>Onygenales</taxon>
        <taxon>Onygenaceae</taxon>
        <taxon>Coccidioides</taxon>
    </lineage>
</organism>
<sequence length="663" mass="73841">MRGCLQSVRWLTTALRRPAPQLSCLPFQPFASTSRLFSSCASRAATAARKPPSELEQRIAAIPIERFRNFCIVAHVDHGKSTLSDRLLELTGTIEPGSNKQVLDKLDVERERGITVKAQTCTMLYNYKGEDYLLHLVDTPGHVDFRAEVSRSYASCGGALLLVDASQGVQAQTVANFYLAFAQGLELVPVINKVDLPSADPDRALDQMKSSFELDVEQAVLVSAKTGLNVKQLLPTIVEQIPAPVGDHTKPLRVLLVDSWYDTYKGVILLIRVFDGEIKAGDQVVSFATGKKYIVGEVGIMYPNQTPQTVLRAGQVGYVYFNPGMKQSQEAKIGDTYTKVGSEKLVEPLPGFEEPKAMVFVAAYPVNSDDFPHLEESINQLLLNDRSITVKKESSEALGGGFRLGFLGTLHCSVFQDRLQQEHGANIIITPPSVPCKILWKSGEETVITSPIDFPDDDSSRMKVEEFQEPYVLTTLTFPQEYLGKVIELCEGNRGEQVSLEFFTATQVILKYQLPLAQLVDDFFGKLKGLTKGYASLDYEESGWRKSNIVKLKLLVNKVPVDAVSRVVHTSQVARLGRQWVTKFKEHVDRQMFEIVIQAAVGNKIVARESVKPFRKDVLAKLHASDVTRRRKLLEKQKEGRKRLQAVGNVIIEHKAFQAFLSK</sequence>
<accession>C5PCH4</accession>
<comment type="function">
    <text evidence="1">Promotes mitochondrial protein synthesis. May act as a fidelity factor of the translation reaction, by catalyzing a one-codon backward translocation of tRNAs on improperly translocated ribosomes. Binds to mitochondrial ribosomes in a GTP-dependent manner.</text>
</comment>
<comment type="catalytic activity">
    <reaction evidence="1">
        <text>GTP + H2O = GDP + phosphate + H(+)</text>
        <dbReference type="Rhea" id="RHEA:19669"/>
        <dbReference type="ChEBI" id="CHEBI:15377"/>
        <dbReference type="ChEBI" id="CHEBI:15378"/>
        <dbReference type="ChEBI" id="CHEBI:37565"/>
        <dbReference type="ChEBI" id="CHEBI:43474"/>
        <dbReference type="ChEBI" id="CHEBI:58189"/>
    </reaction>
</comment>
<comment type="subcellular location">
    <subcellularLocation>
        <location evidence="1">Mitochondrion inner membrane</location>
        <topology evidence="1">Peripheral membrane protein</topology>
        <orientation evidence="1">Matrix side</orientation>
    </subcellularLocation>
</comment>
<comment type="similarity">
    <text evidence="2">Belongs to the TRAFAC class translation factor GTPase superfamily. Classic translation factor GTPase family. LepA subfamily.</text>
</comment>